<feature type="chain" id="PRO_0000409069" description="UDP-glycosyltransferase 72B2">
    <location>
        <begin position="1"/>
        <end position="480"/>
    </location>
</feature>
<feature type="binding site" evidence="1">
    <location>
        <position position="277"/>
    </location>
    <ligand>
        <name>UDP-alpha-D-glucose</name>
        <dbReference type="ChEBI" id="CHEBI:58885"/>
    </ligand>
</feature>
<feature type="binding site" evidence="1">
    <location>
        <begin position="347"/>
        <end position="349"/>
    </location>
    <ligand>
        <name>UDP-alpha-D-glucose</name>
        <dbReference type="ChEBI" id="CHEBI:58885"/>
    </ligand>
</feature>
<feature type="binding site" evidence="1">
    <location>
        <begin position="364"/>
        <end position="372"/>
    </location>
    <ligand>
        <name>UDP-alpha-D-glucose</name>
        <dbReference type="ChEBI" id="CHEBI:58885"/>
    </ligand>
</feature>
<feature type="binding site" evidence="1">
    <location>
        <begin position="386"/>
        <end position="389"/>
    </location>
    <ligand>
        <name>UDP-alpha-D-glucose</name>
        <dbReference type="ChEBI" id="CHEBI:58885"/>
    </ligand>
</feature>
<name>U72B2_ARATH</name>
<protein>
    <recommendedName>
        <fullName>UDP-glycosyltransferase 72B2</fullName>
        <ecNumber>2.4.1.-</ecNumber>
    </recommendedName>
</protein>
<dbReference type="EC" id="2.4.1.-"/>
<dbReference type="EMBL" id="AC023628">
    <property type="protein sequence ID" value="AAF97324.1"/>
    <property type="status" value="ALT_INIT"/>
    <property type="molecule type" value="Genomic_DNA"/>
</dbReference>
<dbReference type="EMBL" id="CP002684">
    <property type="protein sequence ID" value="AEE27281.1"/>
    <property type="molecule type" value="Genomic_DNA"/>
</dbReference>
<dbReference type="EMBL" id="AY062668">
    <property type="protein sequence ID" value="AAL32746.1"/>
    <property type="molecule type" value="mRNA"/>
</dbReference>
<dbReference type="EMBL" id="BT002579">
    <property type="protein sequence ID" value="AAO00939.1"/>
    <property type="molecule type" value="mRNA"/>
</dbReference>
<dbReference type="PIR" id="D86144">
    <property type="entry name" value="D86144"/>
</dbReference>
<dbReference type="RefSeq" id="NP_171646.1">
    <property type="nucleotide sequence ID" value="NM_100021.3"/>
</dbReference>
<dbReference type="SMR" id="Q8W4C2"/>
<dbReference type="FunCoup" id="Q8W4C2">
    <property type="interactions" value="265"/>
</dbReference>
<dbReference type="STRING" id="3702.Q8W4C2"/>
<dbReference type="CAZy" id="GT1">
    <property type="family name" value="Glycosyltransferase Family 1"/>
</dbReference>
<dbReference type="PaxDb" id="3702-AT1G01390.1"/>
<dbReference type="ProteomicsDB" id="228618"/>
<dbReference type="EnsemblPlants" id="AT1G01390.1">
    <property type="protein sequence ID" value="AT1G01390.1"/>
    <property type="gene ID" value="AT1G01390"/>
</dbReference>
<dbReference type="GeneID" id="837790"/>
<dbReference type="Gramene" id="AT1G01390.1">
    <property type="protein sequence ID" value="AT1G01390.1"/>
    <property type="gene ID" value="AT1G01390"/>
</dbReference>
<dbReference type="KEGG" id="ath:AT1G01390"/>
<dbReference type="Araport" id="AT1G01390"/>
<dbReference type="TAIR" id="AT1G01390"/>
<dbReference type="eggNOG" id="KOG1192">
    <property type="taxonomic scope" value="Eukaryota"/>
</dbReference>
<dbReference type="HOGENOM" id="CLU_001724_3_2_1"/>
<dbReference type="InParanoid" id="Q8W4C2"/>
<dbReference type="PhylomeDB" id="Q8W4C2"/>
<dbReference type="PRO" id="PR:Q8W4C2"/>
<dbReference type="Proteomes" id="UP000006548">
    <property type="component" value="Chromosome 1"/>
</dbReference>
<dbReference type="ExpressionAtlas" id="Q8W4C2">
    <property type="expression patterns" value="baseline and differential"/>
</dbReference>
<dbReference type="GO" id="GO:0005783">
    <property type="term" value="C:endoplasmic reticulum"/>
    <property type="evidence" value="ECO:0000314"/>
    <property type="project" value="TAIR"/>
</dbReference>
<dbReference type="GO" id="GO:0008194">
    <property type="term" value="F:UDP-glycosyltransferase activity"/>
    <property type="evidence" value="ECO:0007669"/>
    <property type="project" value="InterPro"/>
</dbReference>
<dbReference type="CDD" id="cd03784">
    <property type="entry name" value="GT1_Gtf-like"/>
    <property type="match status" value="1"/>
</dbReference>
<dbReference type="FunFam" id="3.40.50.2000:FF:000051">
    <property type="entry name" value="Glycosyltransferase"/>
    <property type="match status" value="1"/>
</dbReference>
<dbReference type="FunFam" id="3.40.50.2000:FF:000054">
    <property type="entry name" value="Glycosyltransferase"/>
    <property type="match status" value="1"/>
</dbReference>
<dbReference type="Gene3D" id="3.40.50.2000">
    <property type="entry name" value="Glycogen Phosphorylase B"/>
    <property type="match status" value="2"/>
</dbReference>
<dbReference type="InterPro" id="IPR002213">
    <property type="entry name" value="UDP_glucos_trans"/>
</dbReference>
<dbReference type="InterPro" id="IPR035595">
    <property type="entry name" value="UDP_glycos_trans_CS"/>
</dbReference>
<dbReference type="PANTHER" id="PTHR48046:SF6">
    <property type="entry name" value="GLYCOSYLTRANSFERASE"/>
    <property type="match status" value="1"/>
</dbReference>
<dbReference type="PANTHER" id="PTHR48046">
    <property type="entry name" value="UDP-GLYCOSYLTRANSFERASE 72E1"/>
    <property type="match status" value="1"/>
</dbReference>
<dbReference type="Pfam" id="PF00201">
    <property type="entry name" value="UDPGT"/>
    <property type="match status" value="1"/>
</dbReference>
<dbReference type="SUPFAM" id="SSF53756">
    <property type="entry name" value="UDP-Glycosyltransferase/glycogen phosphorylase"/>
    <property type="match status" value="1"/>
</dbReference>
<dbReference type="PROSITE" id="PS00375">
    <property type="entry name" value="UDPGT"/>
    <property type="match status" value="1"/>
</dbReference>
<organism>
    <name type="scientific">Arabidopsis thaliana</name>
    <name type="common">Mouse-ear cress</name>
    <dbReference type="NCBI Taxonomy" id="3702"/>
    <lineage>
        <taxon>Eukaryota</taxon>
        <taxon>Viridiplantae</taxon>
        <taxon>Streptophyta</taxon>
        <taxon>Embryophyta</taxon>
        <taxon>Tracheophyta</taxon>
        <taxon>Spermatophyta</taxon>
        <taxon>Magnoliopsida</taxon>
        <taxon>eudicotyledons</taxon>
        <taxon>Gunneridae</taxon>
        <taxon>Pentapetalae</taxon>
        <taxon>rosids</taxon>
        <taxon>malvids</taxon>
        <taxon>Brassicales</taxon>
        <taxon>Brassicaceae</taxon>
        <taxon>Camelineae</taxon>
        <taxon>Arabidopsis</taxon>
    </lineage>
</organism>
<reference key="1">
    <citation type="journal article" date="2000" name="Nature">
        <title>Sequence and analysis of chromosome 1 of the plant Arabidopsis thaliana.</title>
        <authorList>
            <person name="Theologis A."/>
            <person name="Ecker J.R."/>
            <person name="Palm C.J."/>
            <person name="Federspiel N.A."/>
            <person name="Kaul S."/>
            <person name="White O."/>
            <person name="Alonso J."/>
            <person name="Altafi H."/>
            <person name="Araujo R."/>
            <person name="Bowman C.L."/>
            <person name="Brooks S.Y."/>
            <person name="Buehler E."/>
            <person name="Chan A."/>
            <person name="Chao Q."/>
            <person name="Chen H."/>
            <person name="Cheuk R.F."/>
            <person name="Chin C.W."/>
            <person name="Chung M.K."/>
            <person name="Conn L."/>
            <person name="Conway A.B."/>
            <person name="Conway A.R."/>
            <person name="Creasy T.H."/>
            <person name="Dewar K."/>
            <person name="Dunn P."/>
            <person name="Etgu P."/>
            <person name="Feldblyum T.V."/>
            <person name="Feng J.-D."/>
            <person name="Fong B."/>
            <person name="Fujii C.Y."/>
            <person name="Gill J.E."/>
            <person name="Goldsmith A.D."/>
            <person name="Haas B."/>
            <person name="Hansen N.F."/>
            <person name="Hughes B."/>
            <person name="Huizar L."/>
            <person name="Hunter J.L."/>
            <person name="Jenkins J."/>
            <person name="Johnson-Hopson C."/>
            <person name="Khan S."/>
            <person name="Khaykin E."/>
            <person name="Kim C.J."/>
            <person name="Koo H.L."/>
            <person name="Kremenetskaia I."/>
            <person name="Kurtz D.B."/>
            <person name="Kwan A."/>
            <person name="Lam B."/>
            <person name="Langin-Hooper S."/>
            <person name="Lee A."/>
            <person name="Lee J.M."/>
            <person name="Lenz C.A."/>
            <person name="Li J.H."/>
            <person name="Li Y.-P."/>
            <person name="Lin X."/>
            <person name="Liu S.X."/>
            <person name="Liu Z.A."/>
            <person name="Luros J.S."/>
            <person name="Maiti R."/>
            <person name="Marziali A."/>
            <person name="Militscher J."/>
            <person name="Miranda M."/>
            <person name="Nguyen M."/>
            <person name="Nierman W.C."/>
            <person name="Osborne B.I."/>
            <person name="Pai G."/>
            <person name="Peterson J."/>
            <person name="Pham P.K."/>
            <person name="Rizzo M."/>
            <person name="Rooney T."/>
            <person name="Rowley D."/>
            <person name="Sakano H."/>
            <person name="Salzberg S.L."/>
            <person name="Schwartz J.R."/>
            <person name="Shinn P."/>
            <person name="Southwick A.M."/>
            <person name="Sun H."/>
            <person name="Tallon L.J."/>
            <person name="Tambunga G."/>
            <person name="Toriumi M.J."/>
            <person name="Town C.D."/>
            <person name="Utterback T."/>
            <person name="Van Aken S."/>
            <person name="Vaysberg M."/>
            <person name="Vysotskaia V.S."/>
            <person name="Walker M."/>
            <person name="Wu D."/>
            <person name="Yu G."/>
            <person name="Fraser C.M."/>
            <person name="Venter J.C."/>
            <person name="Davis R.W."/>
        </authorList>
    </citation>
    <scope>NUCLEOTIDE SEQUENCE [LARGE SCALE GENOMIC DNA]</scope>
    <source>
        <strain>cv. Columbia</strain>
    </source>
</reference>
<reference key="2">
    <citation type="journal article" date="2017" name="Plant J.">
        <title>Araport11: a complete reannotation of the Arabidopsis thaliana reference genome.</title>
        <authorList>
            <person name="Cheng C.Y."/>
            <person name="Krishnakumar V."/>
            <person name="Chan A.P."/>
            <person name="Thibaud-Nissen F."/>
            <person name="Schobel S."/>
            <person name="Town C.D."/>
        </authorList>
    </citation>
    <scope>GENOME REANNOTATION</scope>
    <source>
        <strain>cv. Columbia</strain>
    </source>
</reference>
<reference key="3">
    <citation type="journal article" date="2003" name="Science">
        <title>Empirical analysis of transcriptional activity in the Arabidopsis genome.</title>
        <authorList>
            <person name="Yamada K."/>
            <person name="Lim J."/>
            <person name="Dale J.M."/>
            <person name="Chen H."/>
            <person name="Shinn P."/>
            <person name="Palm C.J."/>
            <person name="Southwick A.M."/>
            <person name="Wu H.C."/>
            <person name="Kim C.J."/>
            <person name="Nguyen M."/>
            <person name="Pham P.K."/>
            <person name="Cheuk R.F."/>
            <person name="Karlin-Newmann G."/>
            <person name="Liu S.X."/>
            <person name="Lam B."/>
            <person name="Sakano H."/>
            <person name="Wu T."/>
            <person name="Yu G."/>
            <person name="Miranda M."/>
            <person name="Quach H.L."/>
            <person name="Tripp M."/>
            <person name="Chang C.H."/>
            <person name="Lee J.M."/>
            <person name="Toriumi M.J."/>
            <person name="Chan M.M."/>
            <person name="Tang C.C."/>
            <person name="Onodera C.S."/>
            <person name="Deng J.M."/>
            <person name="Akiyama K."/>
            <person name="Ansari Y."/>
            <person name="Arakawa T."/>
            <person name="Banh J."/>
            <person name="Banno F."/>
            <person name="Bowser L."/>
            <person name="Brooks S.Y."/>
            <person name="Carninci P."/>
            <person name="Chao Q."/>
            <person name="Choy N."/>
            <person name="Enju A."/>
            <person name="Goldsmith A.D."/>
            <person name="Gurjal M."/>
            <person name="Hansen N.F."/>
            <person name="Hayashizaki Y."/>
            <person name="Johnson-Hopson C."/>
            <person name="Hsuan V.W."/>
            <person name="Iida K."/>
            <person name="Karnes M."/>
            <person name="Khan S."/>
            <person name="Koesema E."/>
            <person name="Ishida J."/>
            <person name="Jiang P.X."/>
            <person name="Jones T."/>
            <person name="Kawai J."/>
            <person name="Kamiya A."/>
            <person name="Meyers C."/>
            <person name="Nakajima M."/>
            <person name="Narusaka M."/>
            <person name="Seki M."/>
            <person name="Sakurai T."/>
            <person name="Satou M."/>
            <person name="Tamse R."/>
            <person name="Vaysberg M."/>
            <person name="Wallender E.K."/>
            <person name="Wong C."/>
            <person name="Yamamura Y."/>
            <person name="Yuan S."/>
            <person name="Shinozaki K."/>
            <person name="Davis R.W."/>
            <person name="Theologis A."/>
            <person name="Ecker J.R."/>
        </authorList>
    </citation>
    <scope>NUCLEOTIDE SEQUENCE [LARGE SCALE MRNA]</scope>
    <source>
        <strain>cv. Columbia</strain>
    </source>
</reference>
<reference key="4">
    <citation type="journal article" date="2001" name="J. Biol. Chem.">
        <title>Phylogenetic analysis of the UDP-glycosyltransferase multigene family of Arabidopsis thaliana.</title>
        <authorList>
            <person name="Li Y."/>
            <person name="Baldauf S."/>
            <person name="Lim E.K."/>
            <person name="Bowles D.J."/>
        </authorList>
    </citation>
    <scope>GENE FAMILY</scope>
</reference>
<keyword id="KW-0328">Glycosyltransferase</keyword>
<keyword id="KW-1185">Reference proteome</keyword>
<keyword id="KW-0808">Transferase</keyword>
<accession>Q8W4C2</accession>
<accession>Q9LNI4</accession>
<sequence length="480" mass="52672">MAEANTPHIAIMPSPGMGHLIPFVELAKRLVQHDCFTVTMIISGETSPSKAQRSVLNSLPSSIASVFLPPADLSDVPSTARIETRAMLTMTRSNPALRELFGSLSTKKSLPAVLVVDMFGADAFDVAVDFHVSPYIFYASNANVLSFFLHLPKLDKTVSCEFRYLTEPLKIPGCVPITGKDFLDTVQDRNDDAYKLLLHNTKRYKEAKGILVNSFVDLESNAIKALQEPAPDKPTVYPIGPLVNTSSSNVNLEDKFGCLSWLDNQPFGSVLYISFGSGGTLTCEQFNELAIGLAESGKRFIWVIRSPSEIVSSSYFNPHSETDPFSFLPIGFLDRTKEKGLVVPSWAPQVQILAHPSTCGFLTHCGWNSTLESIVNGVPLIAWPLFAEQKMNTLLLVEDVGAALRIHAGEDGIVRREEVVRVVKALMEGEEGKAIGNKVKELKEGVVRVLGDDGLSSKSFGEVLLKWKTHQRDINQETSH</sequence>
<gene>
    <name type="primary">UGT72B2</name>
    <name type="ordered locus">At1g01390</name>
    <name type="ORF">F6F3.19</name>
</gene>
<comment type="similarity">
    <text evidence="2">Belongs to the UDP-glycosyltransferase family.</text>
</comment>
<comment type="sequence caution" evidence="2">
    <conflict type="erroneous initiation">
        <sequence resource="EMBL-CDS" id="AAF97324"/>
    </conflict>
    <text>Truncated N-terminus.</text>
</comment>
<proteinExistence type="evidence at transcript level"/>
<evidence type="ECO:0000250" key="1"/>
<evidence type="ECO:0000305" key="2"/>